<proteinExistence type="evidence at protein level"/>
<comment type="function">
    <text evidence="3">Required for the assembly and stability of the mitochondrial ubiquinol-cytochrome c reductase complex (complex III (CIII) or cytochrome b-c1 complex), a multisubunit transmembrane complex that is part of the mitochondrial electron transport chain (ETC) which drives oxidative phosphorylation.</text>
</comment>
<comment type="subunit">
    <text evidence="3">Forms a complex, named COMB/coordinator of mitochondrial CYTB biogenesis, composed of UQCC1, UQCC2, UQCC4, UQCC5 and UQCC6; stabilizes nascent cytochrome b/MT-CYB and promotes its membrane insertion (PubMed:35977508). Forms a complex, named COMA, composed of UQCC1, UQCC2 and UQCC4; activates MT-CYB translation (PubMed:35977508). Forms a complex, named COMC, composed of UQCC1, UQCC2; UQCC3 and UQCC4; mediates MT-CYB hemylation and association with the first nuclear-encoded complex III subunit UQCRQ (PubMed:35977508). Complexes COMA and COMB are bound to the mitochondrion inner membrane by UQCC4 (PubMed:35977508).</text>
</comment>
<comment type="subcellular location">
    <subcellularLocation>
        <location evidence="3">Mitochondrion inner membrane</location>
        <topology evidence="4">Single-pass membrane protein</topology>
    </subcellularLocation>
</comment>
<comment type="similarity">
    <text evidence="4">Belongs to the UQCC4 family.</text>
</comment>
<dbReference type="EMBL" id="AY491413">
    <property type="protein sequence ID" value="AAS21648.1"/>
    <property type="molecule type" value="Genomic_DNA"/>
</dbReference>
<dbReference type="CCDS" id="CCDS57057.1"/>
<dbReference type="RefSeq" id="NP_898973.2">
    <property type="nucleotide sequence ID" value="NM_183150.2"/>
</dbReference>
<dbReference type="FunCoup" id="Q6RUT7">
    <property type="interactions" value="308"/>
</dbReference>
<dbReference type="STRING" id="10090.ENSMUSP00000137122"/>
<dbReference type="iPTMnet" id="Q6RUT7"/>
<dbReference type="PhosphoSitePlus" id="Q6RUT7"/>
<dbReference type="PaxDb" id="10090-ENSMUSP00000137122"/>
<dbReference type="PeptideAtlas" id="Q6RUT7"/>
<dbReference type="ProteomicsDB" id="285329"/>
<dbReference type="Pumba" id="Q6RUT7"/>
<dbReference type="Antibodypedia" id="62620">
    <property type="antibodies" value="5 antibodies from 4 providers"/>
</dbReference>
<dbReference type="Ensembl" id="ENSMUST00000088307.5">
    <property type="protein sequence ID" value="ENSMUSP00000137122.2"/>
    <property type="gene ID" value="ENSMUSG00000067722.5"/>
</dbReference>
<dbReference type="GeneID" id="214489"/>
<dbReference type="KEGG" id="mmu:214489"/>
<dbReference type="UCSC" id="uc012amz.1">
    <property type="organism name" value="mouse"/>
</dbReference>
<dbReference type="AGR" id="MGI:2670966"/>
<dbReference type="CTD" id="283951"/>
<dbReference type="MGI" id="MGI:2670966">
    <property type="gene designation" value="Uqcc4"/>
</dbReference>
<dbReference type="VEuPathDB" id="HostDB:ENSMUSG00000067722"/>
<dbReference type="eggNOG" id="ENOG502S8XX">
    <property type="taxonomic scope" value="Eukaryota"/>
</dbReference>
<dbReference type="GeneTree" id="ENSGT00510000049652"/>
<dbReference type="HOGENOM" id="CLU_142479_1_0_1"/>
<dbReference type="InParanoid" id="Q6RUT7"/>
<dbReference type="OMA" id="GHQRPWW"/>
<dbReference type="OrthoDB" id="5783753at2759"/>
<dbReference type="PhylomeDB" id="Q6RUT7"/>
<dbReference type="TreeFam" id="TF343850"/>
<dbReference type="BioGRID-ORCS" id="214489">
    <property type="hits" value="2 hits in 79 CRISPR screens"/>
</dbReference>
<dbReference type="ChiTaRS" id="BC003965">
    <property type="organism name" value="mouse"/>
</dbReference>
<dbReference type="PRO" id="PR:Q6RUT7"/>
<dbReference type="Proteomes" id="UP000000589">
    <property type="component" value="Chromosome 17"/>
</dbReference>
<dbReference type="RNAct" id="Q6RUT7">
    <property type="molecule type" value="protein"/>
</dbReference>
<dbReference type="Bgee" id="ENSMUSG00000067722">
    <property type="expression patterns" value="Expressed in metanephric renal vesicle and 246 other cell types or tissues"/>
</dbReference>
<dbReference type="GO" id="GO:0005743">
    <property type="term" value="C:mitochondrial inner membrane"/>
    <property type="evidence" value="ECO:0000314"/>
    <property type="project" value="UniProtKB"/>
</dbReference>
<dbReference type="GO" id="GO:0034551">
    <property type="term" value="P:mitochondrial respiratory chain complex III assembly"/>
    <property type="evidence" value="ECO:0000315"/>
    <property type="project" value="UniProtKB"/>
</dbReference>
<dbReference type="InterPro" id="IPR029160">
    <property type="entry name" value="UQCC4"/>
</dbReference>
<dbReference type="InterPro" id="IPR023248">
    <property type="entry name" value="UQCC4_vert"/>
</dbReference>
<dbReference type="PANTHER" id="PTHR35268">
    <property type="entry name" value="PROTEIN CCSMST1"/>
    <property type="match status" value="1"/>
</dbReference>
<dbReference type="PANTHER" id="PTHR35268:SF1">
    <property type="entry name" value="UBIQUINOL-CYTOCHROME-C REDUCTASE COMPLEX ASSEMBLY FACTOR 4"/>
    <property type="match status" value="1"/>
</dbReference>
<dbReference type="Pfam" id="PF15013">
    <property type="entry name" value="CCSMST1"/>
    <property type="match status" value="1"/>
</dbReference>
<dbReference type="PRINTS" id="PR02042">
    <property type="entry name" value="CCSMST1"/>
</dbReference>
<name>UQCC4_MOUSE</name>
<reference key="1">
    <citation type="journal article" date="2009" name="PLoS Biol.">
        <title>Lineage-specific biology revealed by a finished genome assembly of the mouse.</title>
        <authorList>
            <person name="Church D.M."/>
            <person name="Goodstadt L."/>
            <person name="Hillier L.W."/>
            <person name="Zody M.C."/>
            <person name="Goldstein S."/>
            <person name="She X."/>
            <person name="Bult C.J."/>
            <person name="Agarwala R."/>
            <person name="Cherry J.L."/>
            <person name="DiCuccio M."/>
            <person name="Hlavina W."/>
            <person name="Kapustin Y."/>
            <person name="Meric P."/>
            <person name="Maglott D."/>
            <person name="Birtle Z."/>
            <person name="Marques A.C."/>
            <person name="Graves T."/>
            <person name="Zhou S."/>
            <person name="Teague B."/>
            <person name="Potamousis K."/>
            <person name="Churas C."/>
            <person name="Place M."/>
            <person name="Herschleb J."/>
            <person name="Runnheim R."/>
            <person name="Forrest D."/>
            <person name="Amos-Landgraf J."/>
            <person name="Schwartz D.C."/>
            <person name="Cheng Z."/>
            <person name="Lindblad-Toh K."/>
            <person name="Eichler E.E."/>
            <person name="Ponting C.P."/>
        </authorList>
    </citation>
    <scope>NUCLEOTIDE SEQUENCE [LARGE SCALE GENOMIC DNA]</scope>
    <source>
        <strain>C57BL/6J</strain>
    </source>
</reference>
<reference key="2">
    <citation type="journal article" date="2010" name="Cell">
        <title>A tissue-specific atlas of mouse protein phosphorylation and expression.</title>
        <authorList>
            <person name="Huttlin E.L."/>
            <person name="Jedrychowski M.P."/>
            <person name="Elias J.E."/>
            <person name="Goswami T."/>
            <person name="Rad R."/>
            <person name="Beausoleil S.A."/>
            <person name="Villen J."/>
            <person name="Haas W."/>
            <person name="Sowa M.E."/>
            <person name="Gygi S.P."/>
        </authorList>
    </citation>
    <scope>IDENTIFICATION BY MASS SPECTROMETRY [LARGE SCALE ANALYSIS]</scope>
    <source>
        <tissue>Brain</tissue>
        <tissue>Brown adipose tissue</tissue>
        <tissue>Heart</tissue>
        <tissue>Kidney</tissue>
        <tissue>Liver</tissue>
        <tissue>Lung</tissue>
        <tissue>Pancreas</tissue>
        <tissue>Spleen</tissue>
        <tissue>Testis</tissue>
    </source>
</reference>
<reference key="3">
    <citation type="journal article" date="2022" name="Cell Rep.">
        <title>Mitochondrial microproteins link metabolic cues to respiratory chain biogenesis.</title>
        <authorList>
            <person name="Liang C."/>
            <person name="Zhang S."/>
            <person name="Robinson D."/>
            <person name="Ploeg M.V."/>
            <person name="Wilson R."/>
            <person name="Nah J."/>
            <person name="Taylor D."/>
            <person name="Beh S."/>
            <person name="Lim R."/>
            <person name="Sun L."/>
            <person name="Muoio D.M."/>
            <person name="Stroud D.A."/>
            <person name="Ho L."/>
        </authorList>
    </citation>
    <scope>FUNCTION</scope>
    <scope>SUBUNIT</scope>
    <scope>TOPOLOGY</scope>
    <scope>SUBCELLULAR LOCATION</scope>
</reference>
<feature type="signal peptide" evidence="1">
    <location>
        <begin position="1"/>
        <end position="15"/>
    </location>
</feature>
<feature type="chain" id="PRO_0000348603" description="Ubiquinol-cytochrome c reductase complex assembly factor 4">
    <location>
        <begin position="16"/>
        <end position="136"/>
    </location>
</feature>
<feature type="topological domain" description="Mitochondrial matrix" evidence="5">
    <location>
        <begin position="16"/>
        <end position="80"/>
    </location>
</feature>
<feature type="transmembrane region" description="Helical" evidence="1">
    <location>
        <begin position="81"/>
        <end position="97"/>
    </location>
</feature>
<feature type="topological domain" description="Mitochondrial intermembrane" evidence="3">
    <location>
        <begin position="98"/>
        <end position="136"/>
    </location>
</feature>
<feature type="region of interest" description="Disordered" evidence="2">
    <location>
        <begin position="26"/>
        <end position="58"/>
    </location>
</feature>
<feature type="region of interest" description="Disordered" evidence="2">
    <location>
        <begin position="112"/>
        <end position="136"/>
    </location>
</feature>
<feature type="compositionally biased region" description="Acidic residues" evidence="2">
    <location>
        <begin position="112"/>
        <end position="127"/>
    </location>
</feature>
<gene>
    <name type="primary">Uqcc4</name>
    <name type="synonym">Ccsmst1</name>
</gene>
<organism>
    <name type="scientific">Mus musculus</name>
    <name type="common">Mouse</name>
    <dbReference type="NCBI Taxonomy" id="10090"/>
    <lineage>
        <taxon>Eukaryota</taxon>
        <taxon>Metazoa</taxon>
        <taxon>Chordata</taxon>
        <taxon>Craniata</taxon>
        <taxon>Vertebrata</taxon>
        <taxon>Euteleostomi</taxon>
        <taxon>Mammalia</taxon>
        <taxon>Eutheria</taxon>
        <taxon>Euarchontoglires</taxon>
        <taxon>Glires</taxon>
        <taxon>Rodentia</taxon>
        <taxon>Myomorpha</taxon>
        <taxon>Muroidea</taxon>
        <taxon>Muridae</taxon>
        <taxon>Murinae</taxon>
        <taxon>Mus</taxon>
        <taxon>Mus</taxon>
    </lineage>
</organism>
<sequence>MNSVLCSRAAGAVRALRLVGWASRSLHPPPRGRSPAQPADREEEDDDPNLPIQFSGSKATPIRWTVEHSLGKPQQRPWWKVLPLTLTLVALVVWCYQREESGMDLWLRQVLEEEDEEEPEGPPEELEAPALYGART</sequence>
<protein>
    <recommendedName>
        <fullName>Ubiquinol-cytochrome c reductase complex assembly factor 4</fullName>
    </recommendedName>
    <alternativeName>
        <fullName>Protein CCSMST1</fullName>
    </alternativeName>
</protein>
<keyword id="KW-0249">Electron transport</keyword>
<keyword id="KW-0472">Membrane</keyword>
<keyword id="KW-0496">Mitochondrion</keyword>
<keyword id="KW-0999">Mitochondrion inner membrane</keyword>
<keyword id="KW-1185">Reference proteome</keyword>
<keyword id="KW-0679">Respiratory chain</keyword>
<keyword id="KW-0732">Signal</keyword>
<keyword id="KW-0812">Transmembrane</keyword>
<keyword id="KW-1133">Transmembrane helix</keyword>
<keyword id="KW-0813">Transport</keyword>
<accession>Q6RUT7</accession>
<evidence type="ECO:0000255" key="1"/>
<evidence type="ECO:0000256" key="2">
    <source>
        <dbReference type="SAM" id="MobiDB-lite"/>
    </source>
</evidence>
<evidence type="ECO:0000269" key="3">
    <source>
    </source>
</evidence>
<evidence type="ECO:0000305" key="4"/>
<evidence type="ECO:0000305" key="5">
    <source>
    </source>
</evidence>